<organism>
    <name type="scientific">Shigella boydii serotype 18 (strain CDC 3083-94 / BS512)</name>
    <dbReference type="NCBI Taxonomy" id="344609"/>
    <lineage>
        <taxon>Bacteria</taxon>
        <taxon>Pseudomonadati</taxon>
        <taxon>Pseudomonadota</taxon>
        <taxon>Gammaproteobacteria</taxon>
        <taxon>Enterobacterales</taxon>
        <taxon>Enterobacteriaceae</taxon>
        <taxon>Shigella</taxon>
    </lineage>
</organism>
<reference key="1">
    <citation type="submission" date="2008-05" db="EMBL/GenBank/DDBJ databases">
        <title>Complete sequence of Shigella boydii serotype 18 strain BS512.</title>
        <authorList>
            <person name="Rasko D.A."/>
            <person name="Rosovitz M."/>
            <person name="Maurelli A.T."/>
            <person name="Myers G."/>
            <person name="Seshadri R."/>
            <person name="Cer R."/>
            <person name="Jiang L."/>
            <person name="Ravel J."/>
            <person name="Sebastian Y."/>
        </authorList>
    </citation>
    <scope>NUCLEOTIDE SEQUENCE [LARGE SCALE GENOMIC DNA]</scope>
    <source>
        <strain>CDC 3083-94 / BS512</strain>
    </source>
</reference>
<comment type="function">
    <text evidence="1">Represses ulaG and the ulaABCDEF operon.</text>
</comment>
<comment type="subcellular location">
    <subcellularLocation>
        <location evidence="1">Cytoplasm</location>
    </subcellularLocation>
</comment>
<accession>B2TY64</accession>
<protein>
    <recommendedName>
        <fullName evidence="1">HTH-type transcriptional regulator UlaR</fullName>
    </recommendedName>
</protein>
<gene>
    <name evidence="1" type="primary">ulaR</name>
    <name type="ordered locus">SbBS512_E4720</name>
</gene>
<keyword id="KW-0963">Cytoplasm</keyword>
<keyword id="KW-0238">DNA-binding</keyword>
<keyword id="KW-1185">Reference proteome</keyword>
<keyword id="KW-0678">Repressor</keyword>
<keyword id="KW-0804">Transcription</keyword>
<keyword id="KW-0805">Transcription regulation</keyword>
<evidence type="ECO:0000255" key="1">
    <source>
        <dbReference type="HAMAP-Rule" id="MF_01563"/>
    </source>
</evidence>
<proteinExistence type="inferred from homology"/>
<dbReference type="EMBL" id="CP001063">
    <property type="protein sequence ID" value="ACD07887.1"/>
    <property type="molecule type" value="Genomic_DNA"/>
</dbReference>
<dbReference type="RefSeq" id="WP_000133631.1">
    <property type="nucleotide sequence ID" value="NC_010658.1"/>
</dbReference>
<dbReference type="SMR" id="B2TY64"/>
<dbReference type="STRING" id="344609.SbBS512_E4720"/>
<dbReference type="GeneID" id="75202425"/>
<dbReference type="KEGG" id="sbc:SbBS512_E4720"/>
<dbReference type="HOGENOM" id="CLU_060699_3_2_6"/>
<dbReference type="Proteomes" id="UP000001030">
    <property type="component" value="Chromosome"/>
</dbReference>
<dbReference type="GO" id="GO:0005737">
    <property type="term" value="C:cytoplasm"/>
    <property type="evidence" value="ECO:0007669"/>
    <property type="project" value="UniProtKB-SubCell"/>
</dbReference>
<dbReference type="GO" id="GO:0003677">
    <property type="term" value="F:DNA binding"/>
    <property type="evidence" value="ECO:0007669"/>
    <property type="project" value="UniProtKB-KW"/>
</dbReference>
<dbReference type="GO" id="GO:0003700">
    <property type="term" value="F:DNA-binding transcription factor activity"/>
    <property type="evidence" value="ECO:0007669"/>
    <property type="project" value="InterPro"/>
</dbReference>
<dbReference type="GO" id="GO:0045892">
    <property type="term" value="P:negative regulation of DNA-templated transcription"/>
    <property type="evidence" value="ECO:0007669"/>
    <property type="project" value="UniProtKB-UniRule"/>
</dbReference>
<dbReference type="FunFam" id="1.10.10.10:FF:000160">
    <property type="entry name" value="HTH-type transcriptional regulator UlaR"/>
    <property type="match status" value="1"/>
</dbReference>
<dbReference type="Gene3D" id="1.10.10.10">
    <property type="entry name" value="Winged helix-like DNA-binding domain superfamily/Winged helix DNA-binding domain"/>
    <property type="match status" value="1"/>
</dbReference>
<dbReference type="HAMAP" id="MF_01563">
    <property type="entry name" value="HTH_type_UlaR"/>
    <property type="match status" value="1"/>
</dbReference>
<dbReference type="InterPro" id="IPR050313">
    <property type="entry name" value="Carb_Metab_HTH_regulators"/>
</dbReference>
<dbReference type="InterPro" id="IPR014036">
    <property type="entry name" value="DeoR-like_C"/>
</dbReference>
<dbReference type="InterPro" id="IPR001034">
    <property type="entry name" value="DeoR_HTH"/>
</dbReference>
<dbReference type="InterPro" id="IPR037171">
    <property type="entry name" value="NagB/RpiA_transferase-like"/>
</dbReference>
<dbReference type="InterPro" id="IPR018356">
    <property type="entry name" value="Tscrpt_reg_HTH_DeoR_CS"/>
</dbReference>
<dbReference type="InterPro" id="IPR023711">
    <property type="entry name" value="Tscrpt_reg_HTH_UlaR"/>
</dbReference>
<dbReference type="InterPro" id="IPR036388">
    <property type="entry name" value="WH-like_DNA-bd_sf"/>
</dbReference>
<dbReference type="InterPro" id="IPR036390">
    <property type="entry name" value="WH_DNA-bd_sf"/>
</dbReference>
<dbReference type="NCBIfam" id="NF010034">
    <property type="entry name" value="PRK13509.1"/>
    <property type="match status" value="1"/>
</dbReference>
<dbReference type="PANTHER" id="PTHR30363">
    <property type="entry name" value="HTH-TYPE TRANSCRIPTIONAL REGULATOR SRLR-RELATED"/>
    <property type="match status" value="1"/>
</dbReference>
<dbReference type="PANTHER" id="PTHR30363:SF55">
    <property type="entry name" value="HTH-TYPE TRANSCRIPTIONAL REGULATOR ULAR"/>
    <property type="match status" value="1"/>
</dbReference>
<dbReference type="Pfam" id="PF00455">
    <property type="entry name" value="DeoRC"/>
    <property type="match status" value="1"/>
</dbReference>
<dbReference type="Pfam" id="PF08220">
    <property type="entry name" value="HTH_DeoR"/>
    <property type="match status" value="1"/>
</dbReference>
<dbReference type="PRINTS" id="PR00037">
    <property type="entry name" value="HTHLACR"/>
</dbReference>
<dbReference type="SMART" id="SM01134">
    <property type="entry name" value="DeoRC"/>
    <property type="match status" value="1"/>
</dbReference>
<dbReference type="SMART" id="SM00420">
    <property type="entry name" value="HTH_DEOR"/>
    <property type="match status" value="1"/>
</dbReference>
<dbReference type="SUPFAM" id="SSF100950">
    <property type="entry name" value="NagB/RpiA/CoA transferase-like"/>
    <property type="match status" value="1"/>
</dbReference>
<dbReference type="SUPFAM" id="SSF46785">
    <property type="entry name" value="Winged helix' DNA-binding domain"/>
    <property type="match status" value="1"/>
</dbReference>
<dbReference type="PROSITE" id="PS00894">
    <property type="entry name" value="HTH_DEOR_1"/>
    <property type="match status" value="1"/>
</dbReference>
<dbReference type="PROSITE" id="PS51000">
    <property type="entry name" value="HTH_DEOR_2"/>
    <property type="match status" value="1"/>
</dbReference>
<feature type="chain" id="PRO_1000147174" description="HTH-type transcriptional regulator UlaR">
    <location>
        <begin position="1"/>
        <end position="251"/>
    </location>
</feature>
<feature type="domain" description="HTH deoR-type" evidence="1">
    <location>
        <begin position="3"/>
        <end position="58"/>
    </location>
</feature>
<feature type="DNA-binding region" description="H-T-H motif" evidence="1">
    <location>
        <begin position="20"/>
        <end position="39"/>
    </location>
</feature>
<sequence>MTEAQRHQILLEMLAQLGFVTVEKVVERLGISPATARRDINKLDESGKLKKVRNGAEAITQQRPRWTPMNLHQAQNHDEKVRIAKAASQLVNPGESVVINCGSTAFLLGREMCGKPVQIITNYLPLANYLIDQEHDSVIIMGGQYNKSQSITLSPQGSENSLYAGHWMFTSGKGLTAEGLYKTDMLTAMAEQKMLSVVGKLVVLVDSSKIGERAGMLFSRADQIDMLITGKNANPEILQQLEAQGVSILRV</sequence>
<name>ULAR_SHIB3</name>